<proteinExistence type="inferred from homology"/>
<keyword id="KW-0244">Early protein</keyword>
<keyword id="KW-0325">Glycoprotein</keyword>
<organismHost>
    <name type="scientific">Homo sapiens</name>
    <name type="common">Human</name>
    <dbReference type="NCBI Taxonomy" id="9606"/>
</organismHost>
<evidence type="ECO:0000255" key="1"/>
<evidence type="ECO:0000305" key="2"/>
<dbReference type="EMBL" id="M94459">
    <property type="status" value="NOT_ANNOTATED_CDS"/>
    <property type="molecule type" value="Genomic_DNA"/>
</dbReference>
<dbReference type="PIR" id="G44057">
    <property type="entry name" value="G44057"/>
</dbReference>
<dbReference type="SMR" id="P35769"/>
<dbReference type="InterPro" id="IPR003471">
    <property type="entry name" value="Adeno_E3_CR1"/>
</dbReference>
<dbReference type="InterPro" id="IPR003470">
    <property type="entry name" value="Adeno_E3_CR2"/>
</dbReference>
<dbReference type="InterPro" id="IPR036179">
    <property type="entry name" value="Ig-like_dom_sf"/>
</dbReference>
<dbReference type="Pfam" id="PF02440">
    <property type="entry name" value="Adeno_E3_CR1"/>
    <property type="match status" value="1"/>
</dbReference>
<dbReference type="Pfam" id="PF02439">
    <property type="entry name" value="Adeno_E3_CR2"/>
    <property type="match status" value="1"/>
</dbReference>
<dbReference type="SUPFAM" id="SSF48726">
    <property type="entry name" value="Immunoglobulin"/>
    <property type="match status" value="1"/>
</dbReference>
<protein>
    <recommendedName>
        <fullName>Early E3 20.2 kDa glycoprotein</fullName>
    </recommendedName>
</protein>
<name>E321_ADE1A</name>
<reference key="1">
    <citation type="journal article" date="1992" name="Virology">
        <title>The nucleotide sequence of adenovirus type 11 early 3 region: comparison of genome type Ad11p and Ad11a.</title>
        <authorList>
            <person name="Mei Y.-F."/>
            <person name="Wadell G."/>
        </authorList>
    </citation>
    <scope>NUCLEOTIDE SEQUENCE [GENOMIC DNA]</scope>
</reference>
<sequence length="183" mass="20226">MVSTTTFLMLTSIATLTSARSHLTVTIGSNCTLKGPQGGHVFWWRIYDNGWFTKPCDQPGRFFCNGRDLTIINVTANDKGFYYGTDYKSSLDYNIIVLPSTTPAPRKTTFSSSSAANNTISNPTFTALLKRTVNNSTTISTSTISIIAVVTIGISILVFTITYYTCCYKKDEHKGDPLLRFDI</sequence>
<organism>
    <name type="scientific">Human adenovirus B serotype 11 (strain BC34)</name>
    <name type="common">HAdV-11</name>
    <name type="synonym">Human adenovirus 11A (strain BC34)</name>
    <dbReference type="NCBI Taxonomy" id="343463"/>
    <lineage>
        <taxon>Viruses</taxon>
        <taxon>Varidnaviria</taxon>
        <taxon>Bamfordvirae</taxon>
        <taxon>Preplasmiviricota</taxon>
        <taxon>Tectiliviricetes</taxon>
        <taxon>Rowavirales</taxon>
        <taxon>Adenoviridae</taxon>
        <taxon>Mastadenovirus</taxon>
        <taxon>Human mastadenovirus B</taxon>
    </lineage>
</organism>
<feature type="chain" id="PRO_0000221758" description="Early E3 20.2 kDa glycoprotein">
    <location>
        <begin position="1"/>
        <end position="183"/>
    </location>
</feature>
<feature type="glycosylation site" description="N-linked (GlcNAc...) asparagine; by host" evidence="1">
    <location>
        <position position="30"/>
    </location>
</feature>
<feature type="glycosylation site" description="N-linked (GlcNAc...) asparagine; by host" evidence="1">
    <location>
        <position position="73"/>
    </location>
</feature>
<feature type="glycosylation site" description="N-linked (GlcNAc...) asparagine; by host" evidence="1">
    <location>
        <position position="117"/>
    </location>
</feature>
<feature type="glycosylation site" description="N-linked (GlcNAc...) asparagine; by host" evidence="1">
    <location>
        <position position="134"/>
    </location>
</feature>
<feature type="glycosylation site" description="N-linked (GlcNAc...) asparagine; by host" evidence="1">
    <location>
        <position position="135"/>
    </location>
</feature>
<comment type="similarity">
    <text evidence="2">Belongs to the adenoviridae E3_20 family.</text>
</comment>
<accession>P35769</accession>